<comment type="function">
    <text evidence="1">Glucanases play a role in cell expansion during growth, in cell-cell fusion during mating, and in spore release during sporulation. This enzyme may be involved in beta-glucan degradation and also function biosynthetically as a transglycosylase (By similarity).</text>
</comment>
<comment type="catalytic activity">
    <reaction>
        <text>Hydrolysis of (1-&gt;3)-beta-D-glucosidic linkages in (1-&gt;3)-beta-D-glucans.</text>
        <dbReference type="EC" id="3.2.1.39"/>
    </reaction>
</comment>
<comment type="subcellular location">
    <subcellularLocation>
        <location evidence="1">Cell membrane</location>
        <topology evidence="1">Lipid-anchor</topology>
        <topology evidence="1">GPI-anchor</topology>
    </subcellularLocation>
    <subcellularLocation>
        <location evidence="1">Secreted</location>
        <location evidence="1">Cell wall</location>
    </subcellularLocation>
    <text evidence="1">Covalently-linked GPI-modified cell wall protein.</text>
</comment>
<comment type="PTM">
    <text evidence="1">The GPI-anchor is attached to the protein in the endoplasmic reticulum and serves to target the protein to the cell surface. There, the glucosamine-inositol phospholipid moiety is cleaved off and the GPI-modified mannoprotein is covalently attached via its lipidless GPI glycan remnant to the 1,6-beta-glucan of the outer cell wall layer (By similarity).</text>
</comment>
<comment type="similarity">
    <text evidence="5">Belongs to the glycosyl hydrolase 17 family.</text>
</comment>
<reference key="1">
    <citation type="journal article" date="2005" name="Nature">
        <title>Genome sequencing and analysis of Aspergillus oryzae.</title>
        <authorList>
            <person name="Machida M."/>
            <person name="Asai K."/>
            <person name="Sano M."/>
            <person name="Tanaka T."/>
            <person name="Kumagai T."/>
            <person name="Terai G."/>
            <person name="Kusumoto K."/>
            <person name="Arima T."/>
            <person name="Akita O."/>
            <person name="Kashiwagi Y."/>
            <person name="Abe K."/>
            <person name="Gomi K."/>
            <person name="Horiuchi H."/>
            <person name="Kitamoto K."/>
            <person name="Kobayashi T."/>
            <person name="Takeuchi M."/>
            <person name="Denning D.W."/>
            <person name="Galagan J.E."/>
            <person name="Nierman W.C."/>
            <person name="Yu J."/>
            <person name="Archer D.B."/>
            <person name="Bennett J.W."/>
            <person name="Bhatnagar D."/>
            <person name="Cleveland T.E."/>
            <person name="Fedorova N.D."/>
            <person name="Gotoh O."/>
            <person name="Horikawa H."/>
            <person name="Hosoyama A."/>
            <person name="Ichinomiya M."/>
            <person name="Igarashi R."/>
            <person name="Iwashita K."/>
            <person name="Juvvadi P.R."/>
            <person name="Kato M."/>
            <person name="Kato Y."/>
            <person name="Kin T."/>
            <person name="Kokubun A."/>
            <person name="Maeda H."/>
            <person name="Maeyama N."/>
            <person name="Maruyama J."/>
            <person name="Nagasaki H."/>
            <person name="Nakajima T."/>
            <person name="Oda K."/>
            <person name="Okada K."/>
            <person name="Paulsen I."/>
            <person name="Sakamoto K."/>
            <person name="Sawano T."/>
            <person name="Takahashi M."/>
            <person name="Takase K."/>
            <person name="Terabayashi Y."/>
            <person name="Wortman J.R."/>
            <person name="Yamada O."/>
            <person name="Yamagata Y."/>
            <person name="Anazawa H."/>
            <person name="Hata Y."/>
            <person name="Koide Y."/>
            <person name="Komori T."/>
            <person name="Koyama Y."/>
            <person name="Minetoki T."/>
            <person name="Suharnan S."/>
            <person name="Tanaka A."/>
            <person name="Isono K."/>
            <person name="Kuhara S."/>
            <person name="Ogasawara N."/>
            <person name="Kikuchi H."/>
        </authorList>
    </citation>
    <scope>NUCLEOTIDE SEQUENCE [LARGE SCALE GENOMIC DNA]</scope>
    <source>
        <strain>ATCC 42149 / RIB 40</strain>
    </source>
</reference>
<evidence type="ECO:0000250" key="1"/>
<evidence type="ECO:0000250" key="2">
    <source>
        <dbReference type="UniProtKB" id="O22317"/>
    </source>
</evidence>
<evidence type="ECO:0000255" key="3"/>
<evidence type="ECO:0000256" key="4">
    <source>
        <dbReference type="SAM" id="MobiDB-lite"/>
    </source>
</evidence>
<evidence type="ECO:0000305" key="5"/>
<sequence length="463" mass="46656">MQLTHLLAFALSLATSEAAYKGFNYGATKSDGSVKSQSDFESEFSTAKNLVGTSGFTSARLYTMIQGGTTNSPISAIPAAIAENTSLLLGLWASGGGMDNELAALKSAISQYGDSFAKLVVGISVGSEDLYRASSEGEKVNAGIGIGPDDLVSFIKEVRSIISGTALSSVPIGHVDTWTAWTNGSNSAVIDAVDWLGFDGYPYFQSSMSNSISDAKSLFDDSVAKTKAVAKGKEVWITETGWPVSGSTQNLGVASLANAKTYWDEVGCPLFDETNTWWYILQDANPTTPNPSFGVVGSTLSTTPLFDLSCSNSTRPSASASSSAAGSATPVGSAVPSGSAAVNPSSSGIVSSAVPSTTPGFTVGKGFRPSNSSAAAYYSSASASGSAYPKFTKTASGSSATSTTAGSSSDSSSTNSGKSSSESSSTNSGASASSSILATGGASSVSGSVFGALVAVFAFVATL</sequence>
<keyword id="KW-0119">Carbohydrate metabolism</keyword>
<keyword id="KW-1003">Cell membrane</keyword>
<keyword id="KW-0134">Cell wall</keyword>
<keyword id="KW-0961">Cell wall biogenesis/degradation</keyword>
<keyword id="KW-0325">Glycoprotein</keyword>
<keyword id="KW-0336">GPI-anchor</keyword>
<keyword id="KW-0378">Hydrolase</keyword>
<keyword id="KW-0449">Lipoprotein</keyword>
<keyword id="KW-0472">Membrane</keyword>
<keyword id="KW-0624">Polysaccharide degradation</keyword>
<keyword id="KW-1185">Reference proteome</keyword>
<keyword id="KW-0964">Secreted</keyword>
<keyword id="KW-0732">Signal</keyword>
<name>EGLC_ASPOR</name>
<dbReference type="EC" id="3.2.1.39"/>
<dbReference type="EMBL" id="BA000049">
    <property type="protein sequence ID" value="BAE54624.1"/>
    <property type="molecule type" value="Genomic_DNA"/>
</dbReference>
<dbReference type="RefSeq" id="XP_001816626.1">
    <property type="nucleotide sequence ID" value="XM_001816574.2"/>
</dbReference>
<dbReference type="SMR" id="Q2UUZ1"/>
<dbReference type="STRING" id="510516.Q2UUZ1"/>
<dbReference type="CAZy" id="GH17">
    <property type="family name" value="Glycoside Hydrolase Family 17"/>
</dbReference>
<dbReference type="GlyCosmos" id="Q2UUZ1">
    <property type="glycosylation" value="3 sites, No reported glycans"/>
</dbReference>
<dbReference type="EnsemblFungi" id="BAE54624">
    <property type="protein sequence ID" value="BAE54624"/>
    <property type="gene ID" value="AO090009000117"/>
</dbReference>
<dbReference type="GeneID" id="5988556"/>
<dbReference type="KEGG" id="aor:AO090009000117"/>
<dbReference type="VEuPathDB" id="FungiDB:AO090009000117"/>
<dbReference type="HOGENOM" id="CLU_028820_1_1_1"/>
<dbReference type="OMA" id="WDDVGCP"/>
<dbReference type="OrthoDB" id="123590at5052"/>
<dbReference type="Proteomes" id="UP000006564">
    <property type="component" value="Chromosome 1"/>
</dbReference>
<dbReference type="GO" id="GO:0009986">
    <property type="term" value="C:cell surface"/>
    <property type="evidence" value="ECO:0007669"/>
    <property type="project" value="TreeGrafter"/>
</dbReference>
<dbReference type="GO" id="GO:0005576">
    <property type="term" value="C:extracellular region"/>
    <property type="evidence" value="ECO:0007669"/>
    <property type="project" value="UniProtKB-KW"/>
</dbReference>
<dbReference type="GO" id="GO:0009277">
    <property type="term" value="C:fungal-type cell wall"/>
    <property type="evidence" value="ECO:0007669"/>
    <property type="project" value="TreeGrafter"/>
</dbReference>
<dbReference type="GO" id="GO:0005886">
    <property type="term" value="C:plasma membrane"/>
    <property type="evidence" value="ECO:0007669"/>
    <property type="project" value="UniProtKB-SubCell"/>
</dbReference>
<dbReference type="GO" id="GO:0098552">
    <property type="term" value="C:side of membrane"/>
    <property type="evidence" value="ECO:0007669"/>
    <property type="project" value="UniProtKB-KW"/>
</dbReference>
<dbReference type="GO" id="GO:0042973">
    <property type="term" value="F:glucan endo-1,3-beta-D-glucosidase activity"/>
    <property type="evidence" value="ECO:0007669"/>
    <property type="project" value="UniProtKB-EC"/>
</dbReference>
<dbReference type="GO" id="GO:0071555">
    <property type="term" value="P:cell wall organization"/>
    <property type="evidence" value="ECO:0007669"/>
    <property type="project" value="UniProtKB-KW"/>
</dbReference>
<dbReference type="GO" id="GO:0000272">
    <property type="term" value="P:polysaccharide catabolic process"/>
    <property type="evidence" value="ECO:0007669"/>
    <property type="project" value="UniProtKB-KW"/>
</dbReference>
<dbReference type="FunFam" id="3.20.20.80:FF:000233">
    <property type="entry name" value="Probable glucan endo-1,3-beta-glucosidase eglC"/>
    <property type="match status" value="1"/>
</dbReference>
<dbReference type="Gene3D" id="3.20.20.80">
    <property type="entry name" value="Glycosidases"/>
    <property type="match status" value="1"/>
</dbReference>
<dbReference type="InterPro" id="IPR050732">
    <property type="entry name" value="Beta-glucan_modifiers"/>
</dbReference>
<dbReference type="InterPro" id="IPR000490">
    <property type="entry name" value="Glyco_hydro_17"/>
</dbReference>
<dbReference type="InterPro" id="IPR017853">
    <property type="entry name" value="Glycoside_hydrolase_SF"/>
</dbReference>
<dbReference type="PANTHER" id="PTHR16631">
    <property type="entry name" value="GLUCAN 1,3-BETA-GLUCOSIDASE"/>
    <property type="match status" value="1"/>
</dbReference>
<dbReference type="PANTHER" id="PTHR16631:SF13">
    <property type="entry name" value="GLUCAN ENDO-1,3-BETA-GLUCOSIDASE EGLC-RELATED"/>
    <property type="match status" value="1"/>
</dbReference>
<dbReference type="Pfam" id="PF00332">
    <property type="entry name" value="Glyco_hydro_17"/>
    <property type="match status" value="1"/>
</dbReference>
<dbReference type="SUPFAM" id="SSF51445">
    <property type="entry name" value="(Trans)glycosidases"/>
    <property type="match status" value="1"/>
</dbReference>
<protein>
    <recommendedName>
        <fullName>Probable glucan endo-1,3-beta-glucosidase eglC</fullName>
        <ecNumber>3.2.1.39</ecNumber>
    </recommendedName>
    <alternativeName>
        <fullName>Endo-1,3-beta-glucanase eglC</fullName>
    </alternativeName>
    <alternativeName>
        <fullName>Laminarinase eglC</fullName>
    </alternativeName>
</protein>
<proteinExistence type="inferred from homology"/>
<organism>
    <name type="scientific">Aspergillus oryzae (strain ATCC 42149 / RIB 40)</name>
    <name type="common">Yellow koji mold</name>
    <dbReference type="NCBI Taxonomy" id="510516"/>
    <lineage>
        <taxon>Eukaryota</taxon>
        <taxon>Fungi</taxon>
        <taxon>Dikarya</taxon>
        <taxon>Ascomycota</taxon>
        <taxon>Pezizomycotina</taxon>
        <taxon>Eurotiomycetes</taxon>
        <taxon>Eurotiomycetidae</taxon>
        <taxon>Eurotiales</taxon>
        <taxon>Aspergillaceae</taxon>
        <taxon>Aspergillus</taxon>
        <taxon>Aspergillus subgen. Circumdati</taxon>
    </lineage>
</organism>
<gene>
    <name type="primary">eglC</name>
    <name type="ORF">AO090009000117</name>
</gene>
<feature type="signal peptide" evidence="3">
    <location>
        <begin position="1"/>
        <end position="18"/>
    </location>
</feature>
<feature type="chain" id="PRO_0000395145" description="Probable glucan endo-1,3-beta-glucosidase eglC">
    <location>
        <begin position="19"/>
        <end position="440"/>
    </location>
</feature>
<feature type="propeptide" id="PRO_0000395146" description="Removed in mature form" evidence="3">
    <location>
        <begin position="441"/>
        <end position="463"/>
    </location>
</feature>
<feature type="region of interest" description="Disordered" evidence="4">
    <location>
        <begin position="317"/>
        <end position="354"/>
    </location>
</feature>
<feature type="region of interest" description="Disordered" evidence="4">
    <location>
        <begin position="396"/>
        <end position="430"/>
    </location>
</feature>
<feature type="active site" description="Proton donor" evidence="2">
    <location>
        <position position="128"/>
    </location>
</feature>
<feature type="active site" description="Nucleophile" evidence="2">
    <location>
        <position position="239"/>
    </location>
</feature>
<feature type="lipid moiety-binding region" description="GPI-anchor amidated glycine" evidence="3">
    <location>
        <position position="440"/>
    </location>
</feature>
<feature type="glycosylation site" description="N-linked (GlcNAc...) asparagine" evidence="3">
    <location>
        <position position="84"/>
    </location>
</feature>
<feature type="glycosylation site" description="N-linked (GlcNAc...) asparagine" evidence="3">
    <location>
        <position position="183"/>
    </location>
</feature>
<feature type="glycosylation site" description="N-linked (GlcNAc...) asparagine" evidence="3">
    <location>
        <position position="312"/>
    </location>
</feature>
<accession>Q2UUZ1</accession>